<name>C9A_GEMSP</name>
<organism>
    <name type="scientific">Gemmula speciosa</name>
    <name type="common">Splendid gem-turris</name>
    <name type="synonym">Pleurotoma speciosa</name>
    <dbReference type="NCBI Taxonomy" id="439592"/>
    <lineage>
        <taxon>Eukaryota</taxon>
        <taxon>Metazoa</taxon>
        <taxon>Spiralia</taxon>
        <taxon>Lophotrochozoa</taxon>
        <taxon>Mollusca</taxon>
        <taxon>Gastropoda</taxon>
        <taxon>Caenogastropoda</taxon>
        <taxon>Neogastropoda</taxon>
        <taxon>Conoidea</taxon>
        <taxon>Turridae</taxon>
        <taxon>Gemmula</taxon>
    </lineage>
</organism>
<dbReference type="GO" id="GO:0005576">
    <property type="term" value="C:extracellular region"/>
    <property type="evidence" value="ECO:0007669"/>
    <property type="project" value="UniProtKB-SubCell"/>
</dbReference>
<dbReference type="GO" id="GO:0090729">
    <property type="term" value="F:toxin activity"/>
    <property type="evidence" value="ECO:0007669"/>
    <property type="project" value="UniProtKB-KW"/>
</dbReference>
<dbReference type="InterPro" id="IPR026210">
    <property type="entry name" value="Toxin_Pg"/>
</dbReference>
<dbReference type="PRINTS" id="PR02080">
    <property type="entry name" value="TOXINPGFAMLY"/>
</dbReference>
<feature type="peptide" id="PRO_0000346141" description="Turripeptide gsp9a" evidence="2">
    <location>
        <begin position="1"/>
        <end position="35"/>
    </location>
</feature>
<feature type="modified residue" description="4-hydroxyproline" evidence="2">
    <location>
        <position position="3"/>
    </location>
</feature>
<feature type="modified residue" description="4-hydroxyproline" evidence="2">
    <location>
        <position position="4"/>
    </location>
</feature>
<feature type="modified residue" description="4-carboxyglutamate" evidence="2">
    <location>
        <position position="14"/>
    </location>
</feature>
<feature type="modified residue" description="4-carboxyglutamate" evidence="2">
    <location>
        <position position="17"/>
    </location>
</feature>
<feature type="disulfide bond" evidence="1">
    <location>
        <begin position="7"/>
        <end position="22"/>
    </location>
</feature>
<feature type="disulfide bond" evidence="1">
    <location>
        <begin position="12"/>
        <end position="26"/>
    </location>
</feature>
<feature type="disulfide bond" evidence="1">
    <location>
        <begin position="18"/>
        <end position="33"/>
    </location>
</feature>
<comment type="subcellular location">
    <subcellularLocation>
        <location evidence="2">Secreted</location>
    </subcellularLocation>
</comment>
<comment type="tissue specificity">
    <text evidence="4">Expressed by the venom duct.</text>
</comment>
<comment type="domain">
    <text evidence="3">The cysteine framework is IX (C-C-C-C-C-C).</text>
</comment>
<comment type="mass spectrometry"/>
<comment type="similarity">
    <text evidence="3">Belongs to the Pg turripeptide superfamily.</text>
</comment>
<evidence type="ECO:0000250" key="1"/>
<evidence type="ECO:0000269" key="2">
    <source>
    </source>
</evidence>
<evidence type="ECO:0000305" key="3"/>
<evidence type="ECO:0000305" key="4">
    <source>
    </source>
</evidence>
<keyword id="KW-0903">Direct protein sequencing</keyword>
<keyword id="KW-1015">Disulfide bond</keyword>
<keyword id="KW-0301">Gamma-carboxyglutamic acid</keyword>
<keyword id="KW-0379">Hydroxylation</keyword>
<keyword id="KW-0964">Secreted</keyword>
<keyword id="KW-0800">Toxin</keyword>
<proteinExistence type="evidence at protein level"/>
<protein>
    <recommendedName>
        <fullName>Turripeptide gsp9a</fullName>
    </recommendedName>
</protein>
<accession>P0C844</accession>
<reference key="1">
    <citation type="journal article" date="2008" name="Toxicon">
        <title>A rapidly diverging superfamily of peptide toxins in venomous Gemmula species.</title>
        <authorList>
            <person name="Heralde F.M. III"/>
            <person name="Imperial J."/>
            <person name="Bandyopadhyay P.K."/>
            <person name="Olivera B.M."/>
            <person name="Concepcion G.P."/>
            <person name="Santos A.D."/>
        </authorList>
    </citation>
    <scope>PROTEIN SEQUENCE</scope>
    <scope>MASS SPECTROMETRY</scope>
    <scope>HYDROXYLATION AT PRO-3 AND PRO-4</scope>
    <scope>GAMMA-CARBOXYGLUTAMATION AT GLU-14 AND GLU-17</scope>
    <scope>SUBCELLULAR LOCATION</scope>
    <source>
        <tissue>Venom</tissue>
    </source>
</reference>
<sequence>IDPPRYCNHIICYEDSECSQWCTAGCNSITSKCDT</sequence>